<reference key="1">
    <citation type="journal article" date="2003" name="Proc. Natl. Acad. Sci. U.S.A.">
        <title>The complete genome sequence of Mycobacterium bovis.</title>
        <authorList>
            <person name="Garnier T."/>
            <person name="Eiglmeier K."/>
            <person name="Camus J.-C."/>
            <person name="Medina N."/>
            <person name="Mansoor H."/>
            <person name="Pryor M."/>
            <person name="Duthoy S."/>
            <person name="Grondin S."/>
            <person name="Lacroix C."/>
            <person name="Monsempe C."/>
            <person name="Simon S."/>
            <person name="Harris B."/>
            <person name="Atkin R."/>
            <person name="Doggett J."/>
            <person name="Mayes R."/>
            <person name="Keating L."/>
            <person name="Wheeler P.R."/>
            <person name="Parkhill J."/>
            <person name="Barrell B.G."/>
            <person name="Cole S.T."/>
            <person name="Gordon S.V."/>
            <person name="Hewinson R.G."/>
        </authorList>
    </citation>
    <scope>NUCLEOTIDE SEQUENCE [LARGE SCALE GENOMIC DNA]</scope>
    <source>
        <strain>ATCC BAA-935 / AF2122/97</strain>
    </source>
</reference>
<reference key="2">
    <citation type="journal article" date="2017" name="Genome Announc.">
        <title>Updated reference genome sequence and annotation of Mycobacterium bovis AF2122/97.</title>
        <authorList>
            <person name="Malone K.M."/>
            <person name="Farrell D."/>
            <person name="Stuber T.P."/>
            <person name="Schubert O.T."/>
            <person name="Aebersold R."/>
            <person name="Robbe-Austerman S."/>
            <person name="Gordon S.V."/>
        </authorList>
    </citation>
    <scope>NUCLEOTIDE SEQUENCE [LARGE SCALE GENOMIC DNA]</scope>
    <scope>GENOME REANNOTATION</scope>
    <source>
        <strain>ATCC BAA-935 / AF2122/97</strain>
    </source>
</reference>
<keyword id="KW-0028">Amino-acid biosynthesis</keyword>
<keyword id="KW-0032">Aminotransferase</keyword>
<keyword id="KW-0368">Histidine biosynthesis</keyword>
<keyword id="KW-0663">Pyridoxal phosphate</keyword>
<keyword id="KW-1185">Reference proteome</keyword>
<keyword id="KW-0808">Transferase</keyword>
<gene>
    <name evidence="1" type="primary">hisC</name>
    <name type="synonym">hisC1</name>
    <name type="ordered locus">BQ2027_MB1626</name>
</gene>
<sequence length="380" mass="40581">MTRSGHPVTLDDLPLRADLRGKAPYGAPQLAVPVRLNTNENPHPPTRALVDDVVRSVREAAIDLHRYPDRDAVALRADLAGYLTAQTGIQLGVENIWAANGSNEILQQLLQAFGGPGRSAIGFVPSYSMHPIISDGTHTEWIEASRANDFGLDVDVAVAAVVDRKPDVVFIASPNNPSGQSVSLPDLCKLLDVAPGIAIVDEAYGEFSSQPSAVSLVEEYPSKLVVTRTMSKAFAFAGGRLGYLIATPAVIDAMLLVRLPYHLSSVTQAAARAALRHSDDTLSSVAALIAERERVTTSLNDMGFRVIPSDANFVLFGEFADAPAAWRRYLEAGILIRDVGIPGYLRATTGLAEENDAFLRASARIATDLVPVTRSPVGAP</sequence>
<protein>
    <recommendedName>
        <fullName evidence="1">Histidinol-phosphate aminotransferase</fullName>
        <ecNumber evidence="1">2.6.1.9</ecNumber>
    </recommendedName>
    <alternativeName>
        <fullName evidence="1">Imidazole acetol-phosphate transaminase</fullName>
    </alternativeName>
</protein>
<feature type="chain" id="PRO_0000153393" description="Histidinol-phosphate aminotransferase">
    <location>
        <begin position="1"/>
        <end position="380"/>
    </location>
</feature>
<feature type="modified residue" description="N6-(pyridoxal phosphate)lysine" evidence="1">
    <location>
        <position position="232"/>
    </location>
</feature>
<dbReference type="EC" id="2.6.1.9" evidence="1"/>
<dbReference type="EMBL" id="LT708304">
    <property type="protein sequence ID" value="SIU00230.1"/>
    <property type="molecule type" value="Genomic_DNA"/>
</dbReference>
<dbReference type="RefSeq" id="NP_855279.1">
    <property type="nucleotide sequence ID" value="NC_002945.3"/>
</dbReference>
<dbReference type="RefSeq" id="WP_003407947.1">
    <property type="nucleotide sequence ID" value="NC_002945.4"/>
</dbReference>
<dbReference type="SMR" id="P0A679"/>
<dbReference type="KEGG" id="mbo:BQ2027_MB1626"/>
<dbReference type="PATRIC" id="fig|233413.5.peg.1775"/>
<dbReference type="UniPathway" id="UPA00031">
    <property type="reaction ID" value="UER00012"/>
</dbReference>
<dbReference type="Proteomes" id="UP000001419">
    <property type="component" value="Chromosome"/>
</dbReference>
<dbReference type="GO" id="GO:0004400">
    <property type="term" value="F:histidinol-phosphate transaminase activity"/>
    <property type="evidence" value="ECO:0007669"/>
    <property type="project" value="UniProtKB-UniRule"/>
</dbReference>
<dbReference type="GO" id="GO:0030170">
    <property type="term" value="F:pyridoxal phosphate binding"/>
    <property type="evidence" value="ECO:0007669"/>
    <property type="project" value="InterPro"/>
</dbReference>
<dbReference type="GO" id="GO:0000105">
    <property type="term" value="P:L-histidine biosynthetic process"/>
    <property type="evidence" value="ECO:0007669"/>
    <property type="project" value="UniProtKB-UniRule"/>
</dbReference>
<dbReference type="CDD" id="cd00609">
    <property type="entry name" value="AAT_like"/>
    <property type="match status" value="1"/>
</dbReference>
<dbReference type="FunFam" id="3.40.640.10:FF:000138">
    <property type="entry name" value="Histidinol-phosphate aminotransferase"/>
    <property type="match status" value="1"/>
</dbReference>
<dbReference type="Gene3D" id="3.90.1150.10">
    <property type="entry name" value="Aspartate Aminotransferase, domain 1"/>
    <property type="match status" value="1"/>
</dbReference>
<dbReference type="Gene3D" id="3.40.640.10">
    <property type="entry name" value="Type I PLP-dependent aspartate aminotransferase-like (Major domain)"/>
    <property type="match status" value="1"/>
</dbReference>
<dbReference type="HAMAP" id="MF_01023">
    <property type="entry name" value="HisC_aminotrans_2"/>
    <property type="match status" value="1"/>
</dbReference>
<dbReference type="InterPro" id="IPR001917">
    <property type="entry name" value="Aminotrans_II_pyridoxalP_BS"/>
</dbReference>
<dbReference type="InterPro" id="IPR004839">
    <property type="entry name" value="Aminotransferase_I/II_large"/>
</dbReference>
<dbReference type="InterPro" id="IPR005861">
    <property type="entry name" value="HisP_aminotrans"/>
</dbReference>
<dbReference type="InterPro" id="IPR015424">
    <property type="entry name" value="PyrdxlP-dep_Trfase"/>
</dbReference>
<dbReference type="InterPro" id="IPR015421">
    <property type="entry name" value="PyrdxlP-dep_Trfase_major"/>
</dbReference>
<dbReference type="InterPro" id="IPR015422">
    <property type="entry name" value="PyrdxlP-dep_Trfase_small"/>
</dbReference>
<dbReference type="NCBIfam" id="TIGR01141">
    <property type="entry name" value="hisC"/>
    <property type="match status" value="1"/>
</dbReference>
<dbReference type="NCBIfam" id="NF002877">
    <property type="entry name" value="PRK03317.1"/>
    <property type="match status" value="1"/>
</dbReference>
<dbReference type="PANTHER" id="PTHR42885:SF2">
    <property type="entry name" value="HISTIDINOL-PHOSPHATE AMINOTRANSFERASE"/>
    <property type="match status" value="1"/>
</dbReference>
<dbReference type="PANTHER" id="PTHR42885">
    <property type="entry name" value="HISTIDINOL-PHOSPHATE AMINOTRANSFERASE-RELATED"/>
    <property type="match status" value="1"/>
</dbReference>
<dbReference type="Pfam" id="PF00155">
    <property type="entry name" value="Aminotran_1_2"/>
    <property type="match status" value="1"/>
</dbReference>
<dbReference type="SUPFAM" id="SSF53383">
    <property type="entry name" value="PLP-dependent transferases"/>
    <property type="match status" value="1"/>
</dbReference>
<dbReference type="PROSITE" id="PS00599">
    <property type="entry name" value="AA_TRANSFER_CLASS_2"/>
    <property type="match status" value="1"/>
</dbReference>
<name>HIS8_MYCBO</name>
<proteinExistence type="inferred from homology"/>
<organism>
    <name type="scientific">Mycobacterium bovis (strain ATCC BAA-935 / AF2122/97)</name>
    <dbReference type="NCBI Taxonomy" id="233413"/>
    <lineage>
        <taxon>Bacteria</taxon>
        <taxon>Bacillati</taxon>
        <taxon>Actinomycetota</taxon>
        <taxon>Actinomycetes</taxon>
        <taxon>Mycobacteriales</taxon>
        <taxon>Mycobacteriaceae</taxon>
        <taxon>Mycobacterium</taxon>
        <taxon>Mycobacterium tuberculosis complex</taxon>
    </lineage>
</organism>
<evidence type="ECO:0000255" key="1">
    <source>
        <dbReference type="HAMAP-Rule" id="MF_01023"/>
    </source>
</evidence>
<accession>P0A679</accession>
<accession>A0A1R3XYT2</accession>
<accession>O06591</accession>
<accession>X2BIT4</accession>
<comment type="catalytic activity">
    <reaction evidence="1">
        <text>L-histidinol phosphate + 2-oxoglutarate = 3-(imidazol-4-yl)-2-oxopropyl phosphate + L-glutamate</text>
        <dbReference type="Rhea" id="RHEA:23744"/>
        <dbReference type="ChEBI" id="CHEBI:16810"/>
        <dbReference type="ChEBI" id="CHEBI:29985"/>
        <dbReference type="ChEBI" id="CHEBI:57766"/>
        <dbReference type="ChEBI" id="CHEBI:57980"/>
        <dbReference type="EC" id="2.6.1.9"/>
    </reaction>
</comment>
<comment type="cofactor">
    <cofactor evidence="1">
        <name>pyridoxal 5'-phosphate</name>
        <dbReference type="ChEBI" id="CHEBI:597326"/>
    </cofactor>
</comment>
<comment type="pathway">
    <text evidence="1">Amino-acid biosynthesis; L-histidine biosynthesis; L-histidine from 5-phospho-alpha-D-ribose 1-diphosphate: step 7/9.</text>
</comment>
<comment type="subunit">
    <text evidence="1">Homodimer.</text>
</comment>
<comment type="similarity">
    <text evidence="1">Belongs to the class-II pyridoxal-phosphate-dependent aminotransferase family. Histidinol-phosphate aminotransferase subfamily.</text>
</comment>